<reference key="1">
    <citation type="journal article" date="2008" name="J. Bacteriol.">
        <title>Comparative genome sequence analysis of multidrug-resistant Acinetobacter baumannii.</title>
        <authorList>
            <person name="Adams M.D."/>
            <person name="Goglin K."/>
            <person name="Molyneaux N."/>
            <person name="Hujer K.M."/>
            <person name="Lavender H."/>
            <person name="Jamison J.J."/>
            <person name="MacDonald I.J."/>
            <person name="Martin K.M."/>
            <person name="Russo T."/>
            <person name="Campagnari A.A."/>
            <person name="Hujer A.M."/>
            <person name="Bonomo R.A."/>
            <person name="Gill S.R."/>
        </authorList>
    </citation>
    <scope>NUCLEOTIDE SEQUENCE [LARGE SCALE GENOMIC DNA]</scope>
    <source>
        <strain>AB0057</strain>
    </source>
</reference>
<sequence>MKGYEVNFDGLVGPTHHYAGLSFGNEASTKNRNNLSNPKLAAKQGLLKMKALADMGMKQGVLAPHERPHVPMLRRLGFTGDDISVVAQAMRYSPELLSSLSSASPMWTANAATVSPSADSQDERVHFTAANLNNKFHRSIEAETTSQVLQAIFKNERHFVHHEALPQVALFGDEGAANHNRLGGDYAKRGVQVFVYGQQHLNNGLPGPKRYPARQTREASEAIARLHRLDEAHTVFVQQNPDVIDQGVFHNDVIAVSNQQVLFHHQHAFLNQDQAFAEIRQKMASIGEDFISIEVPENRVTVDDAVATYLFNSQILTRPDGGMTIVVPEESRQNAAVWSYLNDMIQMGTPIDAIQVYDLRESMRNGGGPACLRLRVALNETELNAVNPKVLMNDQLFMTLNQWVDKHYRDRLAQEDLADPHLLMESRMALDELTKILGLGSVYPFQK</sequence>
<dbReference type="EC" id="3.5.3.23" evidence="1"/>
<dbReference type="EMBL" id="CP001182">
    <property type="protein sequence ID" value="ACJ42947.1"/>
    <property type="molecule type" value="Genomic_DNA"/>
</dbReference>
<dbReference type="RefSeq" id="WP_000679450.1">
    <property type="nucleotide sequence ID" value="NC_011586.2"/>
</dbReference>
<dbReference type="SMR" id="B7IA89"/>
<dbReference type="GeneID" id="92895367"/>
<dbReference type="KEGG" id="abn:AB57_3584"/>
<dbReference type="HOGENOM" id="CLU_053835_0_0_6"/>
<dbReference type="UniPathway" id="UPA00185">
    <property type="reaction ID" value="UER00280"/>
</dbReference>
<dbReference type="Proteomes" id="UP000007094">
    <property type="component" value="Chromosome"/>
</dbReference>
<dbReference type="GO" id="GO:0009015">
    <property type="term" value="F:N-succinylarginine dihydrolase activity"/>
    <property type="evidence" value="ECO:0007669"/>
    <property type="project" value="UniProtKB-UniRule"/>
</dbReference>
<dbReference type="GO" id="GO:0019544">
    <property type="term" value="P:arginine catabolic process to glutamate"/>
    <property type="evidence" value="ECO:0007669"/>
    <property type="project" value="UniProtKB-UniRule"/>
</dbReference>
<dbReference type="GO" id="GO:0019545">
    <property type="term" value="P:arginine catabolic process to succinate"/>
    <property type="evidence" value="ECO:0007669"/>
    <property type="project" value="UniProtKB-UniRule"/>
</dbReference>
<dbReference type="Gene3D" id="3.75.10.20">
    <property type="entry name" value="Succinylarginine dihydrolase"/>
    <property type="match status" value="1"/>
</dbReference>
<dbReference type="HAMAP" id="MF_01172">
    <property type="entry name" value="AstB"/>
    <property type="match status" value="1"/>
</dbReference>
<dbReference type="InterPro" id="IPR037031">
    <property type="entry name" value="AstB_sf"/>
</dbReference>
<dbReference type="InterPro" id="IPR007079">
    <property type="entry name" value="SuccinylArg_d-Hdrlase_AstB"/>
</dbReference>
<dbReference type="NCBIfam" id="TIGR03241">
    <property type="entry name" value="arg_catab_astB"/>
    <property type="match status" value="1"/>
</dbReference>
<dbReference type="NCBIfam" id="NF009789">
    <property type="entry name" value="PRK13281.1"/>
    <property type="match status" value="1"/>
</dbReference>
<dbReference type="PANTHER" id="PTHR30420">
    <property type="entry name" value="N-SUCCINYLARGININE DIHYDROLASE"/>
    <property type="match status" value="1"/>
</dbReference>
<dbReference type="PANTHER" id="PTHR30420:SF2">
    <property type="entry name" value="N-SUCCINYLARGININE DIHYDROLASE"/>
    <property type="match status" value="1"/>
</dbReference>
<dbReference type="Pfam" id="PF04996">
    <property type="entry name" value="AstB"/>
    <property type="match status" value="1"/>
</dbReference>
<dbReference type="SUPFAM" id="SSF55909">
    <property type="entry name" value="Pentein"/>
    <property type="match status" value="1"/>
</dbReference>
<gene>
    <name evidence="1" type="primary">astB</name>
    <name type="ordered locus">AB57_3584</name>
</gene>
<protein>
    <recommendedName>
        <fullName evidence="1">N-succinylarginine dihydrolase</fullName>
        <ecNumber evidence="1">3.5.3.23</ecNumber>
    </recommendedName>
</protein>
<name>ASTB_ACIB5</name>
<feature type="chain" id="PRO_1000137996" description="N-succinylarginine dihydrolase">
    <location>
        <begin position="1"/>
        <end position="447"/>
    </location>
</feature>
<feature type="active site" evidence="1">
    <location>
        <position position="174"/>
    </location>
</feature>
<feature type="active site" evidence="1">
    <location>
        <position position="250"/>
    </location>
</feature>
<feature type="active site" description="Nucleophile" evidence="1">
    <location>
        <position position="371"/>
    </location>
</feature>
<feature type="binding site" evidence="1">
    <location>
        <begin position="19"/>
        <end position="28"/>
    </location>
    <ligand>
        <name>substrate</name>
    </ligand>
</feature>
<feature type="binding site" evidence="1">
    <location>
        <position position="110"/>
    </location>
    <ligand>
        <name>substrate</name>
    </ligand>
</feature>
<feature type="binding site" evidence="1">
    <location>
        <begin position="137"/>
        <end position="138"/>
    </location>
    <ligand>
        <name>substrate</name>
    </ligand>
</feature>
<feature type="binding site" evidence="1">
    <location>
        <position position="214"/>
    </location>
    <ligand>
        <name>substrate</name>
    </ligand>
</feature>
<feature type="binding site" evidence="1">
    <location>
        <position position="252"/>
    </location>
    <ligand>
        <name>substrate</name>
    </ligand>
</feature>
<feature type="binding site" evidence="1">
    <location>
        <position position="365"/>
    </location>
    <ligand>
        <name>substrate</name>
    </ligand>
</feature>
<accession>B7IA89</accession>
<organism>
    <name type="scientific">Acinetobacter baumannii (strain AB0057)</name>
    <dbReference type="NCBI Taxonomy" id="480119"/>
    <lineage>
        <taxon>Bacteria</taxon>
        <taxon>Pseudomonadati</taxon>
        <taxon>Pseudomonadota</taxon>
        <taxon>Gammaproteobacteria</taxon>
        <taxon>Moraxellales</taxon>
        <taxon>Moraxellaceae</taxon>
        <taxon>Acinetobacter</taxon>
        <taxon>Acinetobacter calcoaceticus/baumannii complex</taxon>
    </lineage>
</organism>
<evidence type="ECO:0000255" key="1">
    <source>
        <dbReference type="HAMAP-Rule" id="MF_01172"/>
    </source>
</evidence>
<proteinExistence type="inferred from homology"/>
<keyword id="KW-0056">Arginine metabolism</keyword>
<keyword id="KW-0378">Hydrolase</keyword>
<comment type="function">
    <text evidence="1">Catalyzes the hydrolysis of N(2)-succinylarginine into N(2)-succinylornithine, ammonia and CO(2).</text>
</comment>
<comment type="catalytic activity">
    <reaction evidence="1">
        <text>N(2)-succinyl-L-arginine + 2 H2O + 2 H(+) = N(2)-succinyl-L-ornithine + 2 NH4(+) + CO2</text>
        <dbReference type="Rhea" id="RHEA:19533"/>
        <dbReference type="ChEBI" id="CHEBI:15377"/>
        <dbReference type="ChEBI" id="CHEBI:15378"/>
        <dbReference type="ChEBI" id="CHEBI:16526"/>
        <dbReference type="ChEBI" id="CHEBI:28938"/>
        <dbReference type="ChEBI" id="CHEBI:58241"/>
        <dbReference type="ChEBI" id="CHEBI:58514"/>
        <dbReference type="EC" id="3.5.3.23"/>
    </reaction>
</comment>
<comment type="pathway">
    <text evidence="1">Amino-acid degradation; L-arginine degradation via AST pathway; L-glutamate and succinate from L-arginine: step 2/5.</text>
</comment>
<comment type="subunit">
    <text evidence="1">Homodimer.</text>
</comment>
<comment type="similarity">
    <text evidence="1">Belongs to the succinylarginine dihydrolase family.</text>
</comment>